<dbReference type="EMBL" id="CP001068">
    <property type="protein sequence ID" value="ACD26265.1"/>
    <property type="molecule type" value="Genomic_DNA"/>
</dbReference>
<dbReference type="SMR" id="B2UAA3"/>
<dbReference type="STRING" id="402626.Rpic_1117"/>
<dbReference type="KEGG" id="rpi:Rpic_1117"/>
<dbReference type="PATRIC" id="fig|402626.5.peg.2323"/>
<dbReference type="eggNOG" id="COG0532">
    <property type="taxonomic scope" value="Bacteria"/>
</dbReference>
<dbReference type="HOGENOM" id="CLU_006301_6_0_4"/>
<dbReference type="GO" id="GO:0005829">
    <property type="term" value="C:cytosol"/>
    <property type="evidence" value="ECO:0007669"/>
    <property type="project" value="TreeGrafter"/>
</dbReference>
<dbReference type="GO" id="GO:0005525">
    <property type="term" value="F:GTP binding"/>
    <property type="evidence" value="ECO:0007669"/>
    <property type="project" value="UniProtKB-KW"/>
</dbReference>
<dbReference type="GO" id="GO:0003924">
    <property type="term" value="F:GTPase activity"/>
    <property type="evidence" value="ECO:0007669"/>
    <property type="project" value="UniProtKB-UniRule"/>
</dbReference>
<dbReference type="GO" id="GO:0097216">
    <property type="term" value="F:guanosine tetraphosphate binding"/>
    <property type="evidence" value="ECO:0007669"/>
    <property type="project" value="UniProtKB-ARBA"/>
</dbReference>
<dbReference type="GO" id="GO:0003743">
    <property type="term" value="F:translation initiation factor activity"/>
    <property type="evidence" value="ECO:0007669"/>
    <property type="project" value="UniProtKB-UniRule"/>
</dbReference>
<dbReference type="CDD" id="cd01887">
    <property type="entry name" value="IF2_eIF5B"/>
    <property type="match status" value="1"/>
</dbReference>
<dbReference type="CDD" id="cd03702">
    <property type="entry name" value="IF2_mtIF2_II"/>
    <property type="match status" value="1"/>
</dbReference>
<dbReference type="CDD" id="cd03692">
    <property type="entry name" value="mtIF2_IVc"/>
    <property type="match status" value="1"/>
</dbReference>
<dbReference type="FunFam" id="2.40.30.10:FF:000007">
    <property type="entry name" value="Translation initiation factor IF-2"/>
    <property type="match status" value="1"/>
</dbReference>
<dbReference type="FunFam" id="2.40.30.10:FF:000008">
    <property type="entry name" value="Translation initiation factor IF-2"/>
    <property type="match status" value="1"/>
</dbReference>
<dbReference type="FunFam" id="3.40.50.10050:FF:000001">
    <property type="entry name" value="Translation initiation factor IF-2"/>
    <property type="match status" value="1"/>
</dbReference>
<dbReference type="FunFam" id="3.40.50.300:FF:000019">
    <property type="entry name" value="Translation initiation factor IF-2"/>
    <property type="match status" value="1"/>
</dbReference>
<dbReference type="Gene3D" id="3.40.50.300">
    <property type="entry name" value="P-loop containing nucleotide triphosphate hydrolases"/>
    <property type="match status" value="1"/>
</dbReference>
<dbReference type="Gene3D" id="3.30.56.50">
    <property type="entry name" value="Putative DNA-binding domain, N-terminal subdomain of bacterial translation initiation factor IF2"/>
    <property type="match status" value="1"/>
</dbReference>
<dbReference type="Gene3D" id="2.40.30.10">
    <property type="entry name" value="Translation factors"/>
    <property type="match status" value="2"/>
</dbReference>
<dbReference type="Gene3D" id="3.40.50.10050">
    <property type="entry name" value="Translation initiation factor IF- 2, domain 3"/>
    <property type="match status" value="1"/>
</dbReference>
<dbReference type="HAMAP" id="MF_00100_B">
    <property type="entry name" value="IF_2_B"/>
    <property type="match status" value="1"/>
</dbReference>
<dbReference type="InterPro" id="IPR009061">
    <property type="entry name" value="DNA-bd_dom_put_sf"/>
</dbReference>
<dbReference type="InterPro" id="IPR053905">
    <property type="entry name" value="EF-G-like_DII"/>
</dbReference>
<dbReference type="InterPro" id="IPR004161">
    <property type="entry name" value="EFTu-like_2"/>
</dbReference>
<dbReference type="InterPro" id="IPR013575">
    <property type="entry name" value="IF2_assoc_dom_bac"/>
</dbReference>
<dbReference type="InterPro" id="IPR044145">
    <property type="entry name" value="IF2_II"/>
</dbReference>
<dbReference type="InterPro" id="IPR006847">
    <property type="entry name" value="IF2_N"/>
</dbReference>
<dbReference type="InterPro" id="IPR027417">
    <property type="entry name" value="P-loop_NTPase"/>
</dbReference>
<dbReference type="InterPro" id="IPR005225">
    <property type="entry name" value="Small_GTP-bd"/>
</dbReference>
<dbReference type="InterPro" id="IPR000795">
    <property type="entry name" value="T_Tr_GTP-bd_dom"/>
</dbReference>
<dbReference type="InterPro" id="IPR000178">
    <property type="entry name" value="TF_IF2_bacterial-like"/>
</dbReference>
<dbReference type="InterPro" id="IPR015760">
    <property type="entry name" value="TIF_IF2"/>
</dbReference>
<dbReference type="InterPro" id="IPR023115">
    <property type="entry name" value="TIF_IF2_dom3"/>
</dbReference>
<dbReference type="InterPro" id="IPR036925">
    <property type="entry name" value="TIF_IF2_dom3_sf"/>
</dbReference>
<dbReference type="InterPro" id="IPR009000">
    <property type="entry name" value="Transl_B-barrel_sf"/>
</dbReference>
<dbReference type="NCBIfam" id="TIGR00487">
    <property type="entry name" value="IF-2"/>
    <property type="match status" value="1"/>
</dbReference>
<dbReference type="NCBIfam" id="TIGR00231">
    <property type="entry name" value="small_GTP"/>
    <property type="match status" value="1"/>
</dbReference>
<dbReference type="PANTHER" id="PTHR43381:SF5">
    <property type="entry name" value="TR-TYPE G DOMAIN-CONTAINING PROTEIN"/>
    <property type="match status" value="1"/>
</dbReference>
<dbReference type="PANTHER" id="PTHR43381">
    <property type="entry name" value="TRANSLATION INITIATION FACTOR IF-2-RELATED"/>
    <property type="match status" value="1"/>
</dbReference>
<dbReference type="Pfam" id="PF22042">
    <property type="entry name" value="EF-G_D2"/>
    <property type="match status" value="1"/>
</dbReference>
<dbReference type="Pfam" id="PF00009">
    <property type="entry name" value="GTP_EFTU"/>
    <property type="match status" value="1"/>
</dbReference>
<dbReference type="Pfam" id="PF03144">
    <property type="entry name" value="GTP_EFTU_D2"/>
    <property type="match status" value="1"/>
</dbReference>
<dbReference type="Pfam" id="PF11987">
    <property type="entry name" value="IF-2"/>
    <property type="match status" value="1"/>
</dbReference>
<dbReference type="Pfam" id="PF08364">
    <property type="entry name" value="IF2_assoc"/>
    <property type="match status" value="1"/>
</dbReference>
<dbReference type="Pfam" id="PF04760">
    <property type="entry name" value="IF2_N"/>
    <property type="match status" value="2"/>
</dbReference>
<dbReference type="SUPFAM" id="SSF52156">
    <property type="entry name" value="Initiation factor IF2/eIF5b, domain 3"/>
    <property type="match status" value="1"/>
</dbReference>
<dbReference type="SUPFAM" id="SSF52540">
    <property type="entry name" value="P-loop containing nucleoside triphosphate hydrolases"/>
    <property type="match status" value="1"/>
</dbReference>
<dbReference type="SUPFAM" id="SSF46955">
    <property type="entry name" value="Putative DNA-binding domain"/>
    <property type="match status" value="1"/>
</dbReference>
<dbReference type="SUPFAM" id="SSF50447">
    <property type="entry name" value="Translation proteins"/>
    <property type="match status" value="2"/>
</dbReference>
<dbReference type="PROSITE" id="PS51722">
    <property type="entry name" value="G_TR_2"/>
    <property type="match status" value="1"/>
</dbReference>
<dbReference type="PROSITE" id="PS01176">
    <property type="entry name" value="IF2"/>
    <property type="match status" value="1"/>
</dbReference>
<name>IF2_RALPJ</name>
<protein>
    <recommendedName>
        <fullName evidence="2">Translation initiation factor IF-2</fullName>
    </recommendedName>
</protein>
<proteinExistence type="inferred from homology"/>
<feature type="chain" id="PRO_1000093816" description="Translation initiation factor IF-2">
    <location>
        <begin position="1"/>
        <end position="964"/>
    </location>
</feature>
<feature type="domain" description="tr-type G">
    <location>
        <begin position="464"/>
        <end position="633"/>
    </location>
</feature>
<feature type="region of interest" description="Disordered" evidence="3">
    <location>
        <begin position="105"/>
        <end position="133"/>
    </location>
</feature>
<feature type="region of interest" description="Disordered" evidence="3">
    <location>
        <begin position="146"/>
        <end position="378"/>
    </location>
</feature>
<feature type="region of interest" description="G1" evidence="1">
    <location>
        <begin position="473"/>
        <end position="480"/>
    </location>
</feature>
<feature type="region of interest" description="G2" evidence="1">
    <location>
        <begin position="498"/>
        <end position="502"/>
    </location>
</feature>
<feature type="region of interest" description="G3" evidence="1">
    <location>
        <begin position="519"/>
        <end position="522"/>
    </location>
</feature>
<feature type="region of interest" description="G4" evidence="1">
    <location>
        <begin position="573"/>
        <end position="576"/>
    </location>
</feature>
<feature type="region of interest" description="G5" evidence="1">
    <location>
        <begin position="609"/>
        <end position="611"/>
    </location>
</feature>
<feature type="compositionally biased region" description="Low complexity" evidence="3">
    <location>
        <begin position="105"/>
        <end position="119"/>
    </location>
</feature>
<feature type="compositionally biased region" description="Basic and acidic residues" evidence="3">
    <location>
        <begin position="123"/>
        <end position="133"/>
    </location>
</feature>
<feature type="compositionally biased region" description="Basic and acidic residues" evidence="3">
    <location>
        <begin position="146"/>
        <end position="183"/>
    </location>
</feature>
<feature type="compositionally biased region" description="Basic and acidic residues" evidence="3">
    <location>
        <begin position="197"/>
        <end position="253"/>
    </location>
</feature>
<feature type="compositionally biased region" description="Basic and acidic residues" evidence="3">
    <location>
        <begin position="266"/>
        <end position="278"/>
    </location>
</feature>
<feature type="compositionally biased region" description="Low complexity" evidence="3">
    <location>
        <begin position="288"/>
        <end position="302"/>
    </location>
</feature>
<feature type="compositionally biased region" description="Pro residues" evidence="3">
    <location>
        <begin position="303"/>
        <end position="313"/>
    </location>
</feature>
<feature type="binding site" evidence="2">
    <location>
        <begin position="473"/>
        <end position="480"/>
    </location>
    <ligand>
        <name>GTP</name>
        <dbReference type="ChEBI" id="CHEBI:37565"/>
    </ligand>
</feature>
<feature type="binding site" evidence="2">
    <location>
        <begin position="519"/>
        <end position="523"/>
    </location>
    <ligand>
        <name>GTP</name>
        <dbReference type="ChEBI" id="CHEBI:37565"/>
    </ligand>
</feature>
<feature type="binding site" evidence="2">
    <location>
        <begin position="573"/>
        <end position="576"/>
    </location>
    <ligand>
        <name>GTP</name>
        <dbReference type="ChEBI" id="CHEBI:37565"/>
    </ligand>
</feature>
<keyword id="KW-0963">Cytoplasm</keyword>
<keyword id="KW-0342">GTP-binding</keyword>
<keyword id="KW-0396">Initiation factor</keyword>
<keyword id="KW-0547">Nucleotide-binding</keyword>
<keyword id="KW-0648">Protein biosynthesis</keyword>
<comment type="function">
    <text evidence="2">One of the essential components for the initiation of protein synthesis. Protects formylmethionyl-tRNA from spontaneous hydrolysis and promotes its binding to the 30S ribosomal subunits. Also involved in the hydrolysis of GTP during the formation of the 70S ribosomal complex.</text>
</comment>
<comment type="subcellular location">
    <subcellularLocation>
        <location evidence="2">Cytoplasm</location>
    </subcellularLocation>
</comment>
<comment type="similarity">
    <text evidence="2">Belongs to the TRAFAC class translation factor GTPase superfamily. Classic translation factor GTPase family. IF-2 subfamily.</text>
</comment>
<organism>
    <name type="scientific">Ralstonia pickettii (strain 12J)</name>
    <dbReference type="NCBI Taxonomy" id="402626"/>
    <lineage>
        <taxon>Bacteria</taxon>
        <taxon>Pseudomonadati</taxon>
        <taxon>Pseudomonadota</taxon>
        <taxon>Betaproteobacteria</taxon>
        <taxon>Burkholderiales</taxon>
        <taxon>Burkholderiaceae</taxon>
        <taxon>Ralstonia</taxon>
    </lineage>
</organism>
<gene>
    <name evidence="2" type="primary">infB</name>
    <name type="ordered locus">Rpic_1117</name>
</gene>
<evidence type="ECO:0000250" key="1"/>
<evidence type="ECO:0000255" key="2">
    <source>
        <dbReference type="HAMAP-Rule" id="MF_00100"/>
    </source>
</evidence>
<evidence type="ECO:0000256" key="3">
    <source>
        <dbReference type="SAM" id="MobiDB-lite"/>
    </source>
</evidence>
<reference key="1">
    <citation type="submission" date="2008-05" db="EMBL/GenBank/DDBJ databases">
        <title>Complete sequence of chromosome 1 of Ralstonia pickettii 12J.</title>
        <authorList>
            <person name="Lucas S."/>
            <person name="Copeland A."/>
            <person name="Lapidus A."/>
            <person name="Glavina del Rio T."/>
            <person name="Dalin E."/>
            <person name="Tice H."/>
            <person name="Bruce D."/>
            <person name="Goodwin L."/>
            <person name="Pitluck S."/>
            <person name="Meincke L."/>
            <person name="Brettin T."/>
            <person name="Detter J.C."/>
            <person name="Han C."/>
            <person name="Kuske C.R."/>
            <person name="Schmutz J."/>
            <person name="Larimer F."/>
            <person name="Land M."/>
            <person name="Hauser L."/>
            <person name="Kyrpides N."/>
            <person name="Mikhailova N."/>
            <person name="Marsh T."/>
            <person name="Richardson P."/>
        </authorList>
    </citation>
    <scope>NUCLEOTIDE SEQUENCE [LARGE SCALE GENOMIC DNA]</scope>
    <source>
        <strain>12J</strain>
    </source>
</reference>
<sequence length="964" mass="103458">MASTTVAQLAGELNRSASALLEQLQAAGVQKATPEDVITESDKTRLLDYLKRAHGSAEDGARKKITITKRETSEIRQADATGKTRTVQVEVKKKRVLVKRDEPNAALAESEASEAAPVVDAEEVARREEEHRRQAELLARQEAELKARQEAMEREEAERRARQEAAEAEQKRQAELAAKKAEEEAVAARAAAEASDEAPRRKAEEDAARLATEREAAQKAADEARVAADKIKAEEDAARKRREAAEAEARAIREMMSAPARVLKTPAERKAEEVKKAEQSGTLHKPVKPAGEARPAAAKKPAAPAPAAAPAPGSPAGDKKGGRGKSGWQDDNRGGKRGGLKTRGDTGGGADGWRSGSKGGRNRHGDDNRNAFQAPTEPVVREVHVPETISVADLAHKMSVKAAEVIKQMMKLGQMVTINQVLDQETAMIVVEEMGHQAVAAKLDDPEAMLVGDVQEQTNAEAETRPPVVTVMGHVDHGKTSLLDYIRRAKVAAGEAGGITQHIGAYHVETDRGVITFLDTPGHEAFTAMRARGAKATDIVILVVAADDGVMPQTKEAIAHAKAAGVPIVVAITKVDKPEANPDRVKQELVAESVIPEEYGGDVPFVPVSAKTGEGIDSLLENVLLQAEVLELKAPVNAPAKGLVVEAQLDKGKGPIATVLVQSGTLKRGDVVLAGTAYGRVRAMLDENGKPAKDAGPSIPVEIQGLSEVPGAGEEVLVLPDERKAREIALFRQGKFRDVKLARQQAAKLENMLEQMSEGDVKSLPLIIKADVQGSQEALVHSLKKLSTDEVRVQIVHAAVGGITESDVNLATASKAVIIGFNTRADAGARKLAENHGIDIRYYNIIYDAVDEVKAAMSGMLSPEKREETTGLVEVRQVFHVPKVGAVAGCMVLDGFVKRNSLVRVLRANVVIFSGELDSLKRFKDDVKEVKQGFECGLSIKNFNDVQEGDQLEVYEITEVARTL</sequence>
<accession>B2UAA3</accession>